<comment type="function">
    <text evidence="1">This enzyme scavenges exogenous and endogenous cytidine and 2'-deoxycytidine for UMP synthesis.</text>
</comment>
<comment type="catalytic activity">
    <reaction evidence="1">
        <text>cytidine + H2O + H(+) = uridine + NH4(+)</text>
        <dbReference type="Rhea" id="RHEA:16069"/>
        <dbReference type="ChEBI" id="CHEBI:15377"/>
        <dbReference type="ChEBI" id="CHEBI:15378"/>
        <dbReference type="ChEBI" id="CHEBI:16704"/>
        <dbReference type="ChEBI" id="CHEBI:17562"/>
        <dbReference type="ChEBI" id="CHEBI:28938"/>
        <dbReference type="EC" id="3.5.4.5"/>
    </reaction>
</comment>
<comment type="catalytic activity">
    <reaction evidence="1">
        <text>2'-deoxycytidine + H2O + H(+) = 2'-deoxyuridine + NH4(+)</text>
        <dbReference type="Rhea" id="RHEA:13433"/>
        <dbReference type="ChEBI" id="CHEBI:15377"/>
        <dbReference type="ChEBI" id="CHEBI:15378"/>
        <dbReference type="ChEBI" id="CHEBI:15698"/>
        <dbReference type="ChEBI" id="CHEBI:16450"/>
        <dbReference type="ChEBI" id="CHEBI:28938"/>
        <dbReference type="EC" id="3.5.4.5"/>
    </reaction>
</comment>
<comment type="cofactor">
    <cofactor evidence="1">
        <name>Zn(2+)</name>
        <dbReference type="ChEBI" id="CHEBI:29105"/>
    </cofactor>
    <text evidence="1">Binds 1 zinc ion.</text>
</comment>
<comment type="subunit">
    <text evidence="1">Homodimer.</text>
</comment>
<comment type="similarity">
    <text evidence="1">Belongs to the cytidine and deoxycytidylate deaminase family.</text>
</comment>
<gene>
    <name evidence="1" type="primary">cdd</name>
    <name type="ordered locus">ECUMN_2476</name>
</gene>
<protein>
    <recommendedName>
        <fullName evidence="1">Cytidine deaminase</fullName>
        <ecNumber evidence="1">3.5.4.5</ecNumber>
    </recommendedName>
    <alternativeName>
        <fullName evidence="1">Cytidine aminohydrolase</fullName>
        <shortName evidence="1">CDA</shortName>
    </alternativeName>
</protein>
<proteinExistence type="inferred from homology"/>
<keyword id="KW-0378">Hydrolase</keyword>
<keyword id="KW-0479">Metal-binding</keyword>
<keyword id="KW-0862">Zinc</keyword>
<reference key="1">
    <citation type="journal article" date="2009" name="PLoS Genet.">
        <title>Organised genome dynamics in the Escherichia coli species results in highly diverse adaptive paths.</title>
        <authorList>
            <person name="Touchon M."/>
            <person name="Hoede C."/>
            <person name="Tenaillon O."/>
            <person name="Barbe V."/>
            <person name="Baeriswyl S."/>
            <person name="Bidet P."/>
            <person name="Bingen E."/>
            <person name="Bonacorsi S."/>
            <person name="Bouchier C."/>
            <person name="Bouvet O."/>
            <person name="Calteau A."/>
            <person name="Chiapello H."/>
            <person name="Clermont O."/>
            <person name="Cruveiller S."/>
            <person name="Danchin A."/>
            <person name="Diard M."/>
            <person name="Dossat C."/>
            <person name="Karoui M.E."/>
            <person name="Frapy E."/>
            <person name="Garry L."/>
            <person name="Ghigo J.M."/>
            <person name="Gilles A.M."/>
            <person name="Johnson J."/>
            <person name="Le Bouguenec C."/>
            <person name="Lescat M."/>
            <person name="Mangenot S."/>
            <person name="Martinez-Jehanne V."/>
            <person name="Matic I."/>
            <person name="Nassif X."/>
            <person name="Oztas S."/>
            <person name="Petit M.A."/>
            <person name="Pichon C."/>
            <person name="Rouy Z."/>
            <person name="Ruf C.S."/>
            <person name="Schneider D."/>
            <person name="Tourret J."/>
            <person name="Vacherie B."/>
            <person name="Vallenet D."/>
            <person name="Medigue C."/>
            <person name="Rocha E.P.C."/>
            <person name="Denamur E."/>
        </authorList>
    </citation>
    <scope>NUCLEOTIDE SEQUENCE [LARGE SCALE GENOMIC DNA]</scope>
    <source>
        <strain>UMN026 / ExPEC</strain>
    </source>
</reference>
<sequence>MHPRFQTAFAQLADNLQSALEPILADKYFPALLTGEQVSSLKSATGLDEDALAFALLPLAAACARTPLSNFNVGAIARGVSGTWYFGANMEFIGATMQQTVHAEQSAISHAWLSGEKALAAITVNYTPCGHCRQFMNELNSGLDLRIHLPGREAHALRDYLPDAFGPKDLEIKTLLMDEQDHGYALTGDALSQAAIAAANRSHMPYSKSPSGVALECKDGRIFSGSYAENAAFNPTLPPLQGALILLNLKGYDYPDIQRAVLAEKADAPLIQWDATSATLKALGCHNIDRVLLA</sequence>
<feature type="chain" id="PRO_1000147100" description="Cytidine deaminase">
    <location>
        <begin position="1"/>
        <end position="294"/>
    </location>
</feature>
<feature type="domain" description="CMP/dCMP-type deaminase 1" evidence="2">
    <location>
        <begin position="48"/>
        <end position="168"/>
    </location>
</feature>
<feature type="domain" description="CMP/dCMP-type deaminase 2" evidence="2">
    <location>
        <begin position="186"/>
        <end position="294"/>
    </location>
</feature>
<feature type="active site" description="Proton donor" evidence="1">
    <location>
        <position position="104"/>
    </location>
</feature>
<feature type="binding site" evidence="1">
    <location>
        <begin position="89"/>
        <end position="91"/>
    </location>
    <ligand>
        <name>substrate</name>
    </ligand>
</feature>
<feature type="binding site" evidence="1">
    <location>
        <position position="102"/>
    </location>
    <ligand>
        <name>Zn(2+)</name>
        <dbReference type="ChEBI" id="CHEBI:29105"/>
        <note>catalytic</note>
    </ligand>
</feature>
<feature type="binding site" evidence="1">
    <location>
        <position position="129"/>
    </location>
    <ligand>
        <name>Zn(2+)</name>
        <dbReference type="ChEBI" id="CHEBI:29105"/>
        <note>catalytic</note>
    </ligand>
</feature>
<feature type="binding site" evidence="1">
    <location>
        <position position="132"/>
    </location>
    <ligand>
        <name>Zn(2+)</name>
        <dbReference type="ChEBI" id="CHEBI:29105"/>
        <note>catalytic</note>
    </ligand>
</feature>
<evidence type="ECO:0000255" key="1">
    <source>
        <dbReference type="HAMAP-Rule" id="MF_01558"/>
    </source>
</evidence>
<evidence type="ECO:0000255" key="2">
    <source>
        <dbReference type="PROSITE-ProRule" id="PRU01083"/>
    </source>
</evidence>
<accession>B7NCH2</accession>
<organism>
    <name type="scientific">Escherichia coli O17:K52:H18 (strain UMN026 / ExPEC)</name>
    <dbReference type="NCBI Taxonomy" id="585056"/>
    <lineage>
        <taxon>Bacteria</taxon>
        <taxon>Pseudomonadati</taxon>
        <taxon>Pseudomonadota</taxon>
        <taxon>Gammaproteobacteria</taxon>
        <taxon>Enterobacterales</taxon>
        <taxon>Enterobacteriaceae</taxon>
        <taxon>Escherichia</taxon>
    </lineage>
</organism>
<dbReference type="EC" id="3.5.4.5" evidence="1"/>
<dbReference type="EMBL" id="CU928163">
    <property type="protein sequence ID" value="CAR13662.1"/>
    <property type="molecule type" value="Genomic_DNA"/>
</dbReference>
<dbReference type="RefSeq" id="WP_000553553.1">
    <property type="nucleotide sequence ID" value="NC_011751.1"/>
</dbReference>
<dbReference type="RefSeq" id="YP_002413190.1">
    <property type="nucleotide sequence ID" value="NC_011751.1"/>
</dbReference>
<dbReference type="SMR" id="B7NCH2"/>
<dbReference type="STRING" id="585056.ECUMN_2476"/>
<dbReference type="KEGG" id="eum:ECUMN_2476"/>
<dbReference type="PATRIC" id="fig|585056.7.peg.2656"/>
<dbReference type="HOGENOM" id="CLU_052424_0_0_6"/>
<dbReference type="Proteomes" id="UP000007097">
    <property type="component" value="Chromosome"/>
</dbReference>
<dbReference type="GO" id="GO:0005829">
    <property type="term" value="C:cytosol"/>
    <property type="evidence" value="ECO:0007669"/>
    <property type="project" value="TreeGrafter"/>
</dbReference>
<dbReference type="GO" id="GO:0004126">
    <property type="term" value="F:cytidine deaminase activity"/>
    <property type="evidence" value="ECO:0007669"/>
    <property type="project" value="UniProtKB-UniRule"/>
</dbReference>
<dbReference type="GO" id="GO:0042802">
    <property type="term" value="F:identical protein binding"/>
    <property type="evidence" value="ECO:0007669"/>
    <property type="project" value="UniProtKB-ARBA"/>
</dbReference>
<dbReference type="GO" id="GO:0008270">
    <property type="term" value="F:zinc ion binding"/>
    <property type="evidence" value="ECO:0007669"/>
    <property type="project" value="UniProtKB-UniRule"/>
</dbReference>
<dbReference type="GO" id="GO:0009972">
    <property type="term" value="P:cytidine deamination"/>
    <property type="evidence" value="ECO:0007669"/>
    <property type="project" value="InterPro"/>
</dbReference>
<dbReference type="CDD" id="cd01283">
    <property type="entry name" value="cytidine_deaminase"/>
    <property type="match status" value="2"/>
</dbReference>
<dbReference type="FunFam" id="3.40.140.10:FF:000006">
    <property type="entry name" value="Cytidine deaminase"/>
    <property type="match status" value="1"/>
</dbReference>
<dbReference type="FunFam" id="3.40.140.10:FF:000007">
    <property type="entry name" value="Cytidine deaminase"/>
    <property type="match status" value="1"/>
</dbReference>
<dbReference type="Gene3D" id="3.40.140.10">
    <property type="entry name" value="Cytidine Deaminase, domain 2"/>
    <property type="match status" value="2"/>
</dbReference>
<dbReference type="HAMAP" id="MF_01558">
    <property type="entry name" value="Cyt_deam"/>
    <property type="match status" value="1"/>
</dbReference>
<dbReference type="InterPro" id="IPR016192">
    <property type="entry name" value="APOBEC/CMP_deaminase_Zn-bd"/>
</dbReference>
<dbReference type="InterPro" id="IPR002125">
    <property type="entry name" value="CMP_dCMP_dom"/>
</dbReference>
<dbReference type="InterPro" id="IPR013171">
    <property type="entry name" value="Cyd/dCyd_deaminase_Zn-bd"/>
</dbReference>
<dbReference type="InterPro" id="IPR050202">
    <property type="entry name" value="Cyt/Deoxycyt_deaminase"/>
</dbReference>
<dbReference type="InterPro" id="IPR006263">
    <property type="entry name" value="Cyt_deam_dimer"/>
</dbReference>
<dbReference type="InterPro" id="IPR016193">
    <property type="entry name" value="Cytidine_deaminase-like"/>
</dbReference>
<dbReference type="InterPro" id="IPR020797">
    <property type="entry name" value="Cytidine_deaminase_bacteria"/>
</dbReference>
<dbReference type="NCBIfam" id="TIGR01355">
    <property type="entry name" value="cyt_deam_dimer"/>
    <property type="match status" value="1"/>
</dbReference>
<dbReference type="NCBIfam" id="NF006537">
    <property type="entry name" value="PRK09027.1"/>
    <property type="match status" value="1"/>
</dbReference>
<dbReference type="PANTHER" id="PTHR11644">
    <property type="entry name" value="CYTIDINE DEAMINASE"/>
    <property type="match status" value="1"/>
</dbReference>
<dbReference type="PANTHER" id="PTHR11644:SF2">
    <property type="entry name" value="CYTIDINE DEAMINASE"/>
    <property type="match status" value="1"/>
</dbReference>
<dbReference type="Pfam" id="PF00383">
    <property type="entry name" value="dCMP_cyt_deam_1"/>
    <property type="match status" value="1"/>
</dbReference>
<dbReference type="Pfam" id="PF08211">
    <property type="entry name" value="dCMP_cyt_deam_2"/>
    <property type="match status" value="1"/>
</dbReference>
<dbReference type="PIRSF" id="PIRSF006334">
    <property type="entry name" value="Cdd_plus_pseudo"/>
    <property type="match status" value="1"/>
</dbReference>
<dbReference type="SUPFAM" id="SSF53927">
    <property type="entry name" value="Cytidine deaminase-like"/>
    <property type="match status" value="2"/>
</dbReference>
<dbReference type="PROSITE" id="PS00903">
    <property type="entry name" value="CYT_DCMP_DEAMINASES_1"/>
    <property type="match status" value="1"/>
</dbReference>
<dbReference type="PROSITE" id="PS51747">
    <property type="entry name" value="CYT_DCMP_DEAMINASES_2"/>
    <property type="match status" value="2"/>
</dbReference>
<name>CDD_ECOLU</name>